<sequence>MVTIPISASTPYDVVLDNQDRWIDSVDWSRYSMLWVVTDKHVESLYGESFRSTLKLTHPHVVSSVVEAGDASKSLSQLEQLVAEGLRHGCDRETLIVAFGGGMIGDLAGFLASVYMRGVPYIQVPTTILAHDSAVGGKVAVNHPLAKNAIGSFYQPSGVYYNVTRLNTLSVQEVRSGLGELLKHAYLSRYVLESSFEDDLFLDLNENEPLDWVSWLARGIRVKQAIVETDEREQGIRAWLNFGHTFGHALESVEAYRIPHGEAVLHGMVFAFLVSGDEVRAMRLFDWMRSNDVTPIDWQPFDRYVEKMIRDKKNRHGAIRFVLLRETITVESVQLEHLQQTFEQMKGWWER</sequence>
<feature type="chain" id="PRO_1000202909" description="3-dehydroquinate synthase">
    <location>
        <begin position="1"/>
        <end position="351"/>
    </location>
</feature>
<feature type="binding site" evidence="1">
    <location>
        <begin position="126"/>
        <end position="127"/>
    </location>
    <ligand>
        <name>NAD(+)</name>
        <dbReference type="ChEBI" id="CHEBI:57540"/>
    </ligand>
</feature>
<feature type="binding site" evidence="1">
    <location>
        <position position="138"/>
    </location>
    <ligand>
        <name>NAD(+)</name>
        <dbReference type="ChEBI" id="CHEBI:57540"/>
    </ligand>
</feature>
<feature type="binding site" evidence="1">
    <location>
        <position position="147"/>
    </location>
    <ligand>
        <name>NAD(+)</name>
        <dbReference type="ChEBI" id="CHEBI:57540"/>
    </ligand>
</feature>
<feature type="binding site" evidence="1">
    <location>
        <position position="180"/>
    </location>
    <ligand>
        <name>Zn(2+)</name>
        <dbReference type="ChEBI" id="CHEBI:29105"/>
    </ligand>
</feature>
<feature type="binding site" evidence="1">
    <location>
        <position position="244"/>
    </location>
    <ligand>
        <name>Zn(2+)</name>
        <dbReference type="ChEBI" id="CHEBI:29105"/>
    </ligand>
</feature>
<feature type="binding site" evidence="1">
    <location>
        <position position="260"/>
    </location>
    <ligand>
        <name>Zn(2+)</name>
        <dbReference type="ChEBI" id="CHEBI:29105"/>
    </ligand>
</feature>
<name>AROB_EXISA</name>
<organism>
    <name type="scientific">Exiguobacterium sp. (strain ATCC BAA-1283 / AT1b)</name>
    <dbReference type="NCBI Taxonomy" id="360911"/>
    <lineage>
        <taxon>Bacteria</taxon>
        <taxon>Bacillati</taxon>
        <taxon>Bacillota</taxon>
        <taxon>Bacilli</taxon>
        <taxon>Bacillales</taxon>
        <taxon>Bacillales Family XII. Incertae Sedis</taxon>
        <taxon>Exiguobacterium</taxon>
    </lineage>
</organism>
<proteinExistence type="inferred from homology"/>
<dbReference type="EC" id="4.2.3.4" evidence="1"/>
<dbReference type="EMBL" id="CP001615">
    <property type="protein sequence ID" value="ACQ71913.1"/>
    <property type="molecule type" value="Genomic_DNA"/>
</dbReference>
<dbReference type="RefSeq" id="WP_015881472.1">
    <property type="nucleotide sequence ID" value="NC_012673.1"/>
</dbReference>
<dbReference type="SMR" id="C4L6N4"/>
<dbReference type="STRING" id="360911.EAT1b_2999"/>
<dbReference type="KEGG" id="eat:EAT1b_2999"/>
<dbReference type="eggNOG" id="COG0337">
    <property type="taxonomic scope" value="Bacteria"/>
</dbReference>
<dbReference type="HOGENOM" id="CLU_001201_0_1_9"/>
<dbReference type="OrthoDB" id="9806583at2"/>
<dbReference type="UniPathway" id="UPA00053">
    <property type="reaction ID" value="UER00085"/>
</dbReference>
<dbReference type="Proteomes" id="UP000000716">
    <property type="component" value="Chromosome"/>
</dbReference>
<dbReference type="GO" id="GO:0005737">
    <property type="term" value="C:cytoplasm"/>
    <property type="evidence" value="ECO:0007669"/>
    <property type="project" value="UniProtKB-SubCell"/>
</dbReference>
<dbReference type="GO" id="GO:0003856">
    <property type="term" value="F:3-dehydroquinate synthase activity"/>
    <property type="evidence" value="ECO:0007669"/>
    <property type="project" value="UniProtKB-UniRule"/>
</dbReference>
<dbReference type="GO" id="GO:0046872">
    <property type="term" value="F:metal ion binding"/>
    <property type="evidence" value="ECO:0007669"/>
    <property type="project" value="UniProtKB-KW"/>
</dbReference>
<dbReference type="GO" id="GO:0000166">
    <property type="term" value="F:nucleotide binding"/>
    <property type="evidence" value="ECO:0007669"/>
    <property type="project" value="UniProtKB-KW"/>
</dbReference>
<dbReference type="GO" id="GO:0008652">
    <property type="term" value="P:amino acid biosynthetic process"/>
    <property type="evidence" value="ECO:0007669"/>
    <property type="project" value="UniProtKB-KW"/>
</dbReference>
<dbReference type="GO" id="GO:0009073">
    <property type="term" value="P:aromatic amino acid family biosynthetic process"/>
    <property type="evidence" value="ECO:0007669"/>
    <property type="project" value="UniProtKB-KW"/>
</dbReference>
<dbReference type="GO" id="GO:0009423">
    <property type="term" value="P:chorismate biosynthetic process"/>
    <property type="evidence" value="ECO:0007669"/>
    <property type="project" value="UniProtKB-UniRule"/>
</dbReference>
<dbReference type="CDD" id="cd08195">
    <property type="entry name" value="DHQS"/>
    <property type="match status" value="1"/>
</dbReference>
<dbReference type="FunFam" id="3.40.50.1970:FF:000007">
    <property type="entry name" value="Pentafunctional AROM polypeptide"/>
    <property type="match status" value="1"/>
</dbReference>
<dbReference type="Gene3D" id="3.40.50.1970">
    <property type="match status" value="1"/>
</dbReference>
<dbReference type="Gene3D" id="1.20.1090.10">
    <property type="entry name" value="Dehydroquinate synthase-like - alpha domain"/>
    <property type="match status" value="1"/>
</dbReference>
<dbReference type="HAMAP" id="MF_00110">
    <property type="entry name" value="DHQ_synthase"/>
    <property type="match status" value="1"/>
</dbReference>
<dbReference type="InterPro" id="IPR050071">
    <property type="entry name" value="Dehydroquinate_synthase"/>
</dbReference>
<dbReference type="InterPro" id="IPR016037">
    <property type="entry name" value="DHQ_synth_AroB"/>
</dbReference>
<dbReference type="InterPro" id="IPR030963">
    <property type="entry name" value="DHQ_synth_fam"/>
</dbReference>
<dbReference type="InterPro" id="IPR030960">
    <property type="entry name" value="DHQS/DOIS_N"/>
</dbReference>
<dbReference type="InterPro" id="IPR056179">
    <property type="entry name" value="DHQS_C"/>
</dbReference>
<dbReference type="PANTHER" id="PTHR43622">
    <property type="entry name" value="3-DEHYDROQUINATE SYNTHASE"/>
    <property type="match status" value="1"/>
</dbReference>
<dbReference type="PANTHER" id="PTHR43622:SF7">
    <property type="entry name" value="3-DEHYDROQUINATE SYNTHASE, CHLOROPLASTIC"/>
    <property type="match status" value="1"/>
</dbReference>
<dbReference type="Pfam" id="PF01761">
    <property type="entry name" value="DHQ_synthase"/>
    <property type="match status" value="1"/>
</dbReference>
<dbReference type="Pfam" id="PF24621">
    <property type="entry name" value="DHQS_C"/>
    <property type="match status" value="1"/>
</dbReference>
<dbReference type="PIRSF" id="PIRSF001455">
    <property type="entry name" value="DHQ_synth"/>
    <property type="match status" value="1"/>
</dbReference>
<dbReference type="SUPFAM" id="SSF56796">
    <property type="entry name" value="Dehydroquinate synthase-like"/>
    <property type="match status" value="1"/>
</dbReference>
<gene>
    <name evidence="1" type="primary">aroB</name>
    <name type="ordered locus">EAT1b_2999</name>
</gene>
<accession>C4L6N4</accession>
<evidence type="ECO:0000255" key="1">
    <source>
        <dbReference type="HAMAP-Rule" id="MF_00110"/>
    </source>
</evidence>
<protein>
    <recommendedName>
        <fullName evidence="1">3-dehydroquinate synthase</fullName>
        <shortName evidence="1">DHQS</shortName>
        <ecNumber evidence="1">4.2.3.4</ecNumber>
    </recommendedName>
</protein>
<reference key="1">
    <citation type="journal article" date="2011" name="J. Bacteriol.">
        <title>Complete genome sequence of the Thermophilic Bacterium Exiguobacterium sp. AT1b.</title>
        <authorList>
            <person name="Vishnivetskaya T.A."/>
            <person name="Lucas S."/>
            <person name="Copeland A."/>
            <person name="Lapidus A."/>
            <person name="Glavina del Rio T."/>
            <person name="Dalin E."/>
            <person name="Tice H."/>
            <person name="Bruce D.C."/>
            <person name="Goodwin L.A."/>
            <person name="Pitluck S."/>
            <person name="Saunders E."/>
            <person name="Brettin T."/>
            <person name="Detter C."/>
            <person name="Han C."/>
            <person name="Larimer F."/>
            <person name="Land M.L."/>
            <person name="Hauser L.J."/>
            <person name="Kyrpides N.C."/>
            <person name="Ovchinnikova G."/>
            <person name="Kathariou S."/>
            <person name="Ramaley R.F."/>
            <person name="Rodrigues D.F."/>
            <person name="Hendrix C."/>
            <person name="Richardson P."/>
            <person name="Tiedje J.M."/>
        </authorList>
    </citation>
    <scope>NUCLEOTIDE SEQUENCE [LARGE SCALE GENOMIC DNA]</scope>
    <source>
        <strain>ATCC BAA-1283 / AT1b</strain>
    </source>
</reference>
<keyword id="KW-0028">Amino-acid biosynthesis</keyword>
<keyword id="KW-0057">Aromatic amino acid biosynthesis</keyword>
<keyword id="KW-0170">Cobalt</keyword>
<keyword id="KW-0963">Cytoplasm</keyword>
<keyword id="KW-0456">Lyase</keyword>
<keyword id="KW-0479">Metal-binding</keyword>
<keyword id="KW-0520">NAD</keyword>
<keyword id="KW-0547">Nucleotide-binding</keyword>
<keyword id="KW-0862">Zinc</keyword>
<comment type="function">
    <text evidence="1">Catalyzes the conversion of 3-deoxy-D-arabino-heptulosonate 7-phosphate (DAHP) to dehydroquinate (DHQ).</text>
</comment>
<comment type="catalytic activity">
    <reaction evidence="1">
        <text>7-phospho-2-dehydro-3-deoxy-D-arabino-heptonate = 3-dehydroquinate + phosphate</text>
        <dbReference type="Rhea" id="RHEA:21968"/>
        <dbReference type="ChEBI" id="CHEBI:32364"/>
        <dbReference type="ChEBI" id="CHEBI:43474"/>
        <dbReference type="ChEBI" id="CHEBI:58394"/>
        <dbReference type="EC" id="4.2.3.4"/>
    </reaction>
</comment>
<comment type="cofactor">
    <cofactor evidence="1">
        <name>Co(2+)</name>
        <dbReference type="ChEBI" id="CHEBI:48828"/>
    </cofactor>
    <cofactor evidence="1">
        <name>Zn(2+)</name>
        <dbReference type="ChEBI" id="CHEBI:29105"/>
    </cofactor>
    <text evidence="1">Binds 1 divalent metal cation per subunit. Can use either Co(2+) or Zn(2+).</text>
</comment>
<comment type="cofactor">
    <cofactor evidence="1">
        <name>NAD(+)</name>
        <dbReference type="ChEBI" id="CHEBI:57540"/>
    </cofactor>
</comment>
<comment type="pathway">
    <text evidence="1">Metabolic intermediate biosynthesis; chorismate biosynthesis; chorismate from D-erythrose 4-phosphate and phosphoenolpyruvate: step 2/7.</text>
</comment>
<comment type="subcellular location">
    <subcellularLocation>
        <location evidence="1">Cytoplasm</location>
    </subcellularLocation>
</comment>
<comment type="similarity">
    <text evidence="1">Belongs to the sugar phosphate cyclases superfamily. Dehydroquinate synthase family.</text>
</comment>